<dbReference type="EC" id="2.3.1.316" evidence="1"/>
<dbReference type="EMBL" id="CP000521">
    <property type="protein sequence ID" value="ABO12987.2"/>
    <property type="molecule type" value="Genomic_DNA"/>
</dbReference>
<dbReference type="RefSeq" id="WP_000988323.1">
    <property type="nucleotide sequence ID" value="NZ_CP053098.1"/>
</dbReference>
<dbReference type="SMR" id="P0DXD7"/>
<dbReference type="KEGG" id="acb:A1S_2570"/>
<dbReference type="GO" id="GO:0016410">
    <property type="term" value="F:N-acyltransferase activity"/>
    <property type="evidence" value="ECO:0007669"/>
    <property type="project" value="TreeGrafter"/>
</dbReference>
<dbReference type="GO" id="GO:0019290">
    <property type="term" value="P:siderophore biosynthetic process"/>
    <property type="evidence" value="ECO:0007669"/>
    <property type="project" value="InterPro"/>
</dbReference>
<dbReference type="Gene3D" id="3.40.630.30">
    <property type="match status" value="1"/>
</dbReference>
<dbReference type="InterPro" id="IPR016181">
    <property type="entry name" value="Acyl_CoA_acyltransferase"/>
</dbReference>
<dbReference type="InterPro" id="IPR019432">
    <property type="entry name" value="Acyltransferase_MbtK/IucB-like"/>
</dbReference>
<dbReference type="PANTHER" id="PTHR31438">
    <property type="entry name" value="LYSINE N-ACYLTRANSFERASE C17G9.06C-RELATED"/>
    <property type="match status" value="1"/>
</dbReference>
<dbReference type="PANTHER" id="PTHR31438:SF1">
    <property type="entry name" value="LYSINE N-ACYLTRANSFERASE C17G9.06C-RELATED"/>
    <property type="match status" value="1"/>
</dbReference>
<dbReference type="Pfam" id="PF13523">
    <property type="entry name" value="Acetyltransf_8"/>
    <property type="match status" value="1"/>
</dbReference>
<dbReference type="SMART" id="SM01006">
    <property type="entry name" value="AlcB"/>
    <property type="match status" value="1"/>
</dbReference>
<dbReference type="SUPFAM" id="SSF55729">
    <property type="entry name" value="Acyl-CoA N-acyltransferases (Nat)"/>
    <property type="match status" value="1"/>
</dbReference>
<proteinExistence type="evidence at protein level"/>
<sequence>MMTISKALPNFFEYAEHQTSYALRDVILPKDLSLLVKWMHQPHIIPQWQLNKPELELAVYFERMLCDDHQHLYIVQIDGKDVGYLEIYEAKRDRLALYYDAKKDDLGWHVLLSEDAVGQGHFRAVMRMLSFLIFEHSNAEKVVGEPDQTMSVYEKIRADIALEPQGTIQLQEKTAMLYHCYREKFYQQCGHYYKTFKRKKADKCLVEN</sequence>
<evidence type="ECO:0000269" key="1">
    <source>
    </source>
</evidence>
<evidence type="ECO:0000303" key="2">
    <source>
    </source>
</evidence>
<evidence type="ECO:0000305" key="3"/>
<evidence type="ECO:0000312" key="4">
    <source>
        <dbReference type="EMBL" id="ABO12987.2"/>
    </source>
</evidence>
<accession>P0DXD7</accession>
<name>FBSK_ACIBT</name>
<organism>
    <name type="scientific">Acinetobacter baumannii (strain ATCC 17978 / DSM 105126 / CIP 53.77 / LMG 1025 / NCDC KC755 / 5377)</name>
    <dbReference type="NCBI Taxonomy" id="400667"/>
    <lineage>
        <taxon>Bacteria</taxon>
        <taxon>Pseudomonadati</taxon>
        <taxon>Pseudomonadota</taxon>
        <taxon>Gammaproteobacteria</taxon>
        <taxon>Moraxellales</taxon>
        <taxon>Moraxellaceae</taxon>
        <taxon>Acinetobacter</taxon>
        <taxon>Acinetobacter calcoaceticus/baumannii complex</taxon>
    </lineage>
</organism>
<gene>
    <name evidence="2" type="primary">fbsK</name>
    <name evidence="4" type="ordered locus">A1S_2570</name>
</gene>
<reference key="1">
    <citation type="journal article" date="2007" name="Genes Dev.">
        <title>New insights into Acinetobacter baumannii pathogenesis revealed by high-density pyrosequencing and transposon mutagenesis.</title>
        <authorList>
            <person name="Smith M.G."/>
            <person name="Gianoulis T.A."/>
            <person name="Pukatzki S."/>
            <person name="Mekalanos J.J."/>
            <person name="Ornston L.N."/>
            <person name="Gerstein M."/>
            <person name="Snyder M."/>
        </authorList>
    </citation>
    <scope>NUCLEOTIDE SEQUENCE [LARGE SCALE GENOMIC DNA]</scope>
    <source>
        <strain>ATCC 17978 / DSM 105126 / CIP 53.77 / LMG 1025 / NCDC KC755 / 5377</strain>
    </source>
</reference>
<reference key="2">
    <citation type="journal article" date="2022" name="ACS Chem. Biol.">
        <title>In Vitro Reconstitution of Fimsbactin Biosynthesis from Acinetobacter baumannii.</title>
        <authorList>
            <person name="Yang J."/>
            <person name="Wencewicz T.A."/>
        </authorList>
    </citation>
    <scope>FUNCTION</scope>
    <scope>CATALYTIC ACTIVITY</scope>
    <scope>PATHWAY</scope>
    <source>
        <strain>ATCC 17978 / DSM 105126 / CIP 53.77 / LMG 1025 / NCDC KC755 / 5377</strain>
    </source>
</reference>
<protein>
    <recommendedName>
        <fullName evidence="2">N-hydroxyputrescine acetyltransferase</fullName>
        <ecNumber evidence="1">2.3.1.316</ecNumber>
    </recommendedName>
</protein>
<keyword id="KW-0012">Acyltransferase</keyword>
<keyword id="KW-0808">Transferase</keyword>
<comment type="function">
    <text evidence="1">N-acetyltransferase involved in the biosynthesis of fimsbactin A, the major siderophore produced by A.baumannii (PubMed:36122366). Catalyzes the acetylation of N-hydroxyputrescine to form N(1)-acetyl-N(1)-hydroxyputrescine (ahPutr) (PubMed:36122366).</text>
</comment>
<comment type="catalytic activity">
    <reaction evidence="1">
        <text>N-hydroxyputrescine + acetyl-CoA = N(1)-acetyl-N(1)-hydroxyputrescine + CoA</text>
        <dbReference type="Rhea" id="RHEA:79183"/>
        <dbReference type="ChEBI" id="CHEBI:57287"/>
        <dbReference type="ChEBI" id="CHEBI:57288"/>
        <dbReference type="ChEBI" id="CHEBI:180909"/>
        <dbReference type="ChEBI" id="CHEBI:229591"/>
        <dbReference type="EC" id="2.3.1.316"/>
    </reaction>
    <physiologicalReaction direction="left-to-right" evidence="1">
        <dbReference type="Rhea" id="RHEA:79184"/>
    </physiologicalReaction>
</comment>
<comment type="pathway">
    <text evidence="1">Siderophore biosynthesis.</text>
</comment>
<comment type="similarity">
    <text evidence="3">Belongs to the IucB family.</text>
</comment>
<feature type="chain" id="PRO_0000460751" description="N-hydroxyputrescine acetyltransferase">
    <location>
        <begin position="1"/>
        <end position="208"/>
    </location>
</feature>